<dbReference type="EMBL" id="AF400621">
    <property type="protein sequence ID" value="AAK94025.1"/>
    <property type="molecule type" value="mRNA"/>
</dbReference>
<dbReference type="EMBL" id="AC011914">
    <property type="protein sequence ID" value="AAG52032.1"/>
    <property type="molecule type" value="Genomic_DNA"/>
</dbReference>
<dbReference type="EMBL" id="CP002684">
    <property type="protein sequence ID" value="AEE34854.1"/>
    <property type="molecule type" value="Genomic_DNA"/>
</dbReference>
<dbReference type="EMBL" id="BT024817">
    <property type="protein sequence ID" value="ABD60700.1"/>
    <property type="molecule type" value="mRNA"/>
</dbReference>
<dbReference type="EMBL" id="AB493528">
    <property type="protein sequence ID" value="BAH30366.1"/>
    <property type="molecule type" value="mRNA"/>
</dbReference>
<dbReference type="SMR" id="Q9CA46"/>
<dbReference type="FunCoup" id="Q9CA46">
    <property type="interactions" value="12"/>
</dbReference>
<dbReference type="IntAct" id="Q9CA46">
    <property type="interactions" value="17"/>
</dbReference>
<dbReference type="STRING" id="3702.Q9CA46"/>
<dbReference type="iPTMnet" id="Q9CA46"/>
<dbReference type="PaxDb" id="3702-AT1G68880.1"/>
<dbReference type="EnsemblPlants" id="AT1G68880.1">
    <property type="protein sequence ID" value="AT1G68880.1"/>
    <property type="gene ID" value="AT1G68880"/>
</dbReference>
<dbReference type="Gramene" id="AT1G68880.1">
    <property type="protein sequence ID" value="AT1G68880.1"/>
    <property type="gene ID" value="AT1G68880"/>
</dbReference>
<dbReference type="KEGG" id="ath:AT1G68880"/>
<dbReference type="Araport" id="AT1G68880"/>
<dbReference type="TAIR" id="AT1G68880">
    <property type="gene designation" value="BZIP"/>
</dbReference>
<dbReference type="eggNOG" id="ENOG502R1JM">
    <property type="taxonomic scope" value="Eukaryota"/>
</dbReference>
<dbReference type="HOGENOM" id="CLU_2052931_0_0_1"/>
<dbReference type="InParanoid" id="Q9CA46"/>
<dbReference type="OMA" id="VYNLPCE"/>
<dbReference type="OrthoDB" id="551672at2759"/>
<dbReference type="PhylomeDB" id="Q9CA46"/>
<dbReference type="PRO" id="PR:Q9CA46"/>
<dbReference type="Proteomes" id="UP000006548">
    <property type="component" value="Chromosome 1"/>
</dbReference>
<dbReference type="ExpressionAtlas" id="Q9CA46">
    <property type="expression patterns" value="baseline and differential"/>
</dbReference>
<dbReference type="GO" id="GO:0005634">
    <property type="term" value="C:nucleus"/>
    <property type="evidence" value="ECO:0000314"/>
    <property type="project" value="TAIR"/>
</dbReference>
<dbReference type="GO" id="GO:0003677">
    <property type="term" value="F:DNA binding"/>
    <property type="evidence" value="ECO:0007669"/>
    <property type="project" value="UniProtKB-KW"/>
</dbReference>
<dbReference type="GO" id="GO:0003700">
    <property type="term" value="F:DNA-binding transcription factor activity"/>
    <property type="evidence" value="ECO:0000250"/>
    <property type="project" value="TAIR"/>
</dbReference>
<dbReference type="GO" id="GO:0042803">
    <property type="term" value="F:protein homodimerization activity"/>
    <property type="evidence" value="ECO:0000314"/>
    <property type="project" value="UniProtKB"/>
</dbReference>
<dbReference type="CDD" id="cd14702">
    <property type="entry name" value="bZIP_plant_GBF1"/>
    <property type="match status" value="1"/>
</dbReference>
<dbReference type="FunFam" id="1.20.5.170:FF:000020">
    <property type="entry name" value="BZIP transcription factor"/>
    <property type="match status" value="1"/>
</dbReference>
<dbReference type="Gene3D" id="1.20.5.170">
    <property type="match status" value="1"/>
</dbReference>
<dbReference type="InterPro" id="IPR044521">
    <property type="entry name" value="AtbZIP8/43"/>
</dbReference>
<dbReference type="InterPro" id="IPR004827">
    <property type="entry name" value="bZIP"/>
</dbReference>
<dbReference type="InterPro" id="IPR045314">
    <property type="entry name" value="bZIP_plant_GBF1"/>
</dbReference>
<dbReference type="InterPro" id="IPR046347">
    <property type="entry name" value="bZIP_sf"/>
</dbReference>
<dbReference type="PANTHER" id="PTHR46324">
    <property type="entry name" value="BASIC LEUCINE ZIPPER 43-RELATED"/>
    <property type="match status" value="1"/>
</dbReference>
<dbReference type="PANTHER" id="PTHR46324:SF13">
    <property type="entry name" value="BASIC LEUCINE ZIPPER 8"/>
    <property type="match status" value="1"/>
</dbReference>
<dbReference type="Pfam" id="PF00170">
    <property type="entry name" value="bZIP_1"/>
    <property type="match status" value="1"/>
</dbReference>
<dbReference type="SMART" id="SM00338">
    <property type="entry name" value="BRLZ"/>
    <property type="match status" value="1"/>
</dbReference>
<dbReference type="SUPFAM" id="SSF57959">
    <property type="entry name" value="Leucine zipper domain"/>
    <property type="match status" value="1"/>
</dbReference>
<dbReference type="PROSITE" id="PS50217">
    <property type="entry name" value="BZIP"/>
    <property type="match status" value="1"/>
</dbReference>
<dbReference type="PROSITE" id="PS00036">
    <property type="entry name" value="BZIP_BASIC"/>
    <property type="match status" value="1"/>
</dbReference>
<comment type="subunit">
    <text evidence="4">Homodimer.</text>
</comment>
<comment type="subcellular location">
    <subcellularLocation>
        <location evidence="1">Nucleus</location>
    </subcellularLocation>
</comment>
<comment type="similarity">
    <text evidence="6">Belongs to the bZIP family.</text>
</comment>
<feature type="chain" id="PRO_0000435620" description="Basic leucine zipper 8">
    <location>
        <begin position="1"/>
        <end position="138"/>
    </location>
</feature>
<feature type="domain" description="bZIP" evidence="2">
    <location>
        <begin position="45"/>
        <end position="108"/>
    </location>
</feature>
<feature type="region of interest" description="Disordered" evidence="3">
    <location>
        <begin position="30"/>
        <end position="67"/>
    </location>
</feature>
<feature type="region of interest" description="Basic motif" evidence="2">
    <location>
        <begin position="47"/>
        <end position="68"/>
    </location>
</feature>
<feature type="region of interest" description="Leucine-zipper" evidence="2">
    <location>
        <begin position="73"/>
        <end position="87"/>
    </location>
</feature>
<feature type="short sequence motif" description="Nuclear localization signal" evidence="1">
    <location>
        <begin position="48"/>
        <end position="55"/>
    </location>
</feature>
<feature type="compositionally biased region" description="Basic and acidic residues" evidence="3">
    <location>
        <begin position="37"/>
        <end position="47"/>
    </location>
</feature>
<protein>
    <recommendedName>
        <fullName evidence="5">Basic leucine zipper 8</fullName>
        <shortName evidence="5">AtbZIP8</shortName>
        <shortName evidence="5">bZIP protein 8</shortName>
    </recommendedName>
</protein>
<name>BZIP8_ARATH</name>
<sequence>MAGSVYNLPSQNPNPQSLFQIFVDRVPLSNLPATSDDSSRTAEDNERKRRRKVSNRESARRSRMRKQRHMEELWSMLVQLINKNKSLVDELSQARECYEKVIEENMKLREENSKSRKMIGEIGLNRFLSVEADQIWTF</sequence>
<gene>
    <name evidence="5" type="primary">BZIP8</name>
    <name evidence="7" type="ordered locus">At1g68880</name>
    <name evidence="8" type="ORF">F14K14.1</name>
</gene>
<organism>
    <name type="scientific">Arabidopsis thaliana</name>
    <name type="common">Mouse-ear cress</name>
    <dbReference type="NCBI Taxonomy" id="3702"/>
    <lineage>
        <taxon>Eukaryota</taxon>
        <taxon>Viridiplantae</taxon>
        <taxon>Streptophyta</taxon>
        <taxon>Embryophyta</taxon>
        <taxon>Tracheophyta</taxon>
        <taxon>Spermatophyta</taxon>
        <taxon>Magnoliopsida</taxon>
        <taxon>eudicotyledons</taxon>
        <taxon>Gunneridae</taxon>
        <taxon>Pentapetalae</taxon>
        <taxon>rosids</taxon>
        <taxon>malvids</taxon>
        <taxon>Brassicales</taxon>
        <taxon>Brassicaceae</taxon>
        <taxon>Camelineae</taxon>
        <taxon>Arabidopsis</taxon>
    </lineage>
</organism>
<evidence type="ECO:0000255" key="1">
    <source>
        <dbReference type="PROSITE-ProRule" id="PRU00768"/>
    </source>
</evidence>
<evidence type="ECO:0000255" key="2">
    <source>
        <dbReference type="PROSITE-ProRule" id="PRU00978"/>
    </source>
</evidence>
<evidence type="ECO:0000256" key="3">
    <source>
        <dbReference type="SAM" id="MobiDB-lite"/>
    </source>
</evidence>
<evidence type="ECO:0000269" key="4">
    <source>
    </source>
</evidence>
<evidence type="ECO:0000303" key="5">
    <source>
    </source>
</evidence>
<evidence type="ECO:0000305" key="6"/>
<evidence type="ECO:0000312" key="7">
    <source>
        <dbReference type="Araport" id="AT1G68880"/>
    </source>
</evidence>
<evidence type="ECO:0000312" key="8">
    <source>
        <dbReference type="EMBL" id="AAG52032.1"/>
    </source>
</evidence>
<reference key="1">
    <citation type="submission" date="2001-07" db="EMBL/GenBank/DDBJ databases">
        <title>AtbZIP8, a transcription factor in Arabidopsis thaliana.</title>
        <authorList>
            <person name="Wang X."/>
            <person name="Droege-Laser W."/>
        </authorList>
    </citation>
    <scope>NUCLEOTIDE SEQUENCE [MRNA]</scope>
</reference>
<reference key="2">
    <citation type="journal article" date="2000" name="Nature">
        <title>Sequence and analysis of chromosome 1 of the plant Arabidopsis thaliana.</title>
        <authorList>
            <person name="Theologis A."/>
            <person name="Ecker J.R."/>
            <person name="Palm C.J."/>
            <person name="Federspiel N.A."/>
            <person name="Kaul S."/>
            <person name="White O."/>
            <person name="Alonso J."/>
            <person name="Altafi H."/>
            <person name="Araujo R."/>
            <person name="Bowman C.L."/>
            <person name="Brooks S.Y."/>
            <person name="Buehler E."/>
            <person name="Chan A."/>
            <person name="Chao Q."/>
            <person name="Chen H."/>
            <person name="Cheuk R.F."/>
            <person name="Chin C.W."/>
            <person name="Chung M.K."/>
            <person name="Conn L."/>
            <person name="Conway A.B."/>
            <person name="Conway A.R."/>
            <person name="Creasy T.H."/>
            <person name="Dewar K."/>
            <person name="Dunn P."/>
            <person name="Etgu P."/>
            <person name="Feldblyum T.V."/>
            <person name="Feng J.-D."/>
            <person name="Fong B."/>
            <person name="Fujii C.Y."/>
            <person name="Gill J.E."/>
            <person name="Goldsmith A.D."/>
            <person name="Haas B."/>
            <person name="Hansen N.F."/>
            <person name="Hughes B."/>
            <person name="Huizar L."/>
            <person name="Hunter J.L."/>
            <person name="Jenkins J."/>
            <person name="Johnson-Hopson C."/>
            <person name="Khan S."/>
            <person name="Khaykin E."/>
            <person name="Kim C.J."/>
            <person name="Koo H.L."/>
            <person name="Kremenetskaia I."/>
            <person name="Kurtz D.B."/>
            <person name="Kwan A."/>
            <person name="Lam B."/>
            <person name="Langin-Hooper S."/>
            <person name="Lee A."/>
            <person name="Lee J.M."/>
            <person name="Lenz C.A."/>
            <person name="Li J.H."/>
            <person name="Li Y.-P."/>
            <person name="Lin X."/>
            <person name="Liu S.X."/>
            <person name="Liu Z.A."/>
            <person name="Luros J.S."/>
            <person name="Maiti R."/>
            <person name="Marziali A."/>
            <person name="Militscher J."/>
            <person name="Miranda M."/>
            <person name="Nguyen M."/>
            <person name="Nierman W.C."/>
            <person name="Osborne B.I."/>
            <person name="Pai G."/>
            <person name="Peterson J."/>
            <person name="Pham P.K."/>
            <person name="Rizzo M."/>
            <person name="Rooney T."/>
            <person name="Rowley D."/>
            <person name="Sakano H."/>
            <person name="Salzberg S.L."/>
            <person name="Schwartz J.R."/>
            <person name="Shinn P."/>
            <person name="Southwick A.M."/>
            <person name="Sun H."/>
            <person name="Tallon L.J."/>
            <person name="Tambunga G."/>
            <person name="Toriumi M.J."/>
            <person name="Town C.D."/>
            <person name="Utterback T."/>
            <person name="Van Aken S."/>
            <person name="Vaysberg M."/>
            <person name="Vysotskaia V.S."/>
            <person name="Walker M."/>
            <person name="Wu D."/>
            <person name="Yu G."/>
            <person name="Fraser C.M."/>
            <person name="Venter J.C."/>
            <person name="Davis R.W."/>
        </authorList>
    </citation>
    <scope>NUCLEOTIDE SEQUENCE [LARGE SCALE GENOMIC DNA]</scope>
    <source>
        <strain>cv. Columbia</strain>
    </source>
</reference>
<reference key="3">
    <citation type="journal article" date="2017" name="Plant J.">
        <title>Araport11: a complete reannotation of the Arabidopsis thaliana reference genome.</title>
        <authorList>
            <person name="Cheng C.Y."/>
            <person name="Krishnakumar V."/>
            <person name="Chan A.P."/>
            <person name="Thibaud-Nissen F."/>
            <person name="Schobel S."/>
            <person name="Town C.D."/>
        </authorList>
    </citation>
    <scope>GENOME REANNOTATION</scope>
    <source>
        <strain>cv. Columbia</strain>
    </source>
</reference>
<reference key="4">
    <citation type="submission" date="2006-03" db="EMBL/GenBank/DDBJ databases">
        <title>Arabidopsis ORF clones.</title>
        <authorList>
            <person name="Kim C.J."/>
            <person name="Chen H."/>
            <person name="Shinn P."/>
            <person name="Ecker J.R."/>
        </authorList>
    </citation>
    <scope>NUCLEOTIDE SEQUENCE [LARGE SCALE MRNA]</scope>
    <source>
        <strain>cv. Columbia</strain>
    </source>
</reference>
<reference key="5">
    <citation type="submission" date="2009-03" db="EMBL/GenBank/DDBJ databases">
        <title>ORF cloning and analysis of Arabidopsis transcription factor genes.</title>
        <authorList>
            <person name="Fujita M."/>
            <person name="Mizukado S."/>
            <person name="Seki M."/>
            <person name="Shinozaki K."/>
            <person name="Mitsuda N."/>
            <person name="Takiguchi Y."/>
            <person name="Takagi M."/>
        </authorList>
    </citation>
    <scope>NUCLEOTIDE SEQUENCE [LARGE SCALE MRNA]</scope>
</reference>
<reference key="6">
    <citation type="journal article" date="2002" name="Trends Plant Sci.">
        <title>bZIP transcription factors in Arabidopsis.</title>
        <authorList>
            <person name="Jakoby M."/>
            <person name="Weisshaar B."/>
            <person name="Droege-Laser W."/>
            <person name="Vicente-Carbajosa J."/>
            <person name="Tiedemann J."/>
            <person name="Kroj T."/>
            <person name="Parcy F."/>
        </authorList>
    </citation>
    <scope>GENE FAMILY</scope>
    <scope>NOMENCLATURE</scope>
</reference>
<reference key="7">
    <citation type="journal article" date="2006" name="Mol. Biol. Evol.">
        <title>Cross-species annotation of basic leucine zipper factor interactions: Insight into the evolution of closed interaction networks.</title>
        <authorList>
            <person name="Deppmann C.D."/>
            <person name="Alvania R.S."/>
            <person name="Taparowsky E.J."/>
        </authorList>
    </citation>
    <scope>SUBUNIT</scope>
</reference>
<keyword id="KW-0175">Coiled coil</keyword>
<keyword id="KW-0238">DNA-binding</keyword>
<keyword id="KW-0539">Nucleus</keyword>
<keyword id="KW-1185">Reference proteome</keyword>
<keyword id="KW-0804">Transcription</keyword>
<keyword id="KW-0805">Transcription regulation</keyword>
<accession>Q9CA46</accession>
<proteinExistence type="evidence at protein level"/>